<evidence type="ECO:0000255" key="1">
    <source>
        <dbReference type="HAMAP-Rule" id="MF_00321"/>
    </source>
</evidence>
<comment type="function">
    <text evidence="1">Necessary for normal cell division and for the maintenance of normal septation.</text>
</comment>
<comment type="cofactor">
    <cofactor evidence="1">
        <name>Mg(2+)</name>
        <dbReference type="ChEBI" id="CHEBI:18420"/>
    </cofactor>
</comment>
<comment type="similarity">
    <text evidence="1">Belongs to the TRAFAC class TrmE-Era-EngA-EngB-Septin-like GTPase superfamily. EngB GTPase family.</text>
</comment>
<organism>
    <name type="scientific">Campylobacter jejuni subsp. doylei (strain ATCC BAA-1458 / RM4099 / 269.97)</name>
    <dbReference type="NCBI Taxonomy" id="360109"/>
    <lineage>
        <taxon>Bacteria</taxon>
        <taxon>Pseudomonadati</taxon>
        <taxon>Campylobacterota</taxon>
        <taxon>Epsilonproteobacteria</taxon>
        <taxon>Campylobacterales</taxon>
        <taxon>Campylobacteraceae</taxon>
        <taxon>Campylobacter</taxon>
    </lineage>
</organism>
<accession>A7H4G2</accession>
<sequence length="199" mass="22916">MIISAKFITSLVVKFDENLSSNFSEVAFLGRSNVGKSSLINSLCKQKNLAKSSATPGKTQLINFFEVTCKRNEEKFNINFIDLPGFGYAKVSKNLKEIWNQNLDEFLKFRTSIKLFIHLIDSRHTHLEIDVNLNDYLKRFLRPDQKILKVFTKCDKLNQSEKARLKNEFKDSILVSNLNKFGLDSLEDVIINQTLGFDK</sequence>
<gene>
    <name evidence="1" type="primary">engB</name>
    <name type="ordered locus">JJD26997_1349</name>
</gene>
<reference key="1">
    <citation type="submission" date="2007-07" db="EMBL/GenBank/DDBJ databases">
        <title>Complete genome sequence of Campylobacter jejuni subsp doylei 269.97 isolated from human blood.</title>
        <authorList>
            <person name="Fouts D.E."/>
            <person name="Mongodin E.F."/>
            <person name="Puiu D."/>
            <person name="Sebastian Y."/>
            <person name="Miller W.G."/>
            <person name="Mandrell R.E."/>
            <person name="Lastovica A.J."/>
            <person name="Nelson K.E."/>
        </authorList>
    </citation>
    <scope>NUCLEOTIDE SEQUENCE [LARGE SCALE GENOMIC DNA]</scope>
    <source>
        <strain>ATCC BAA-1458 / RM4099 / 269.97</strain>
    </source>
</reference>
<feature type="chain" id="PRO_1000005806" description="Probable GTP-binding protein EngB">
    <location>
        <begin position="1"/>
        <end position="199"/>
    </location>
</feature>
<feature type="domain" description="EngB-type G" evidence="1">
    <location>
        <begin position="22"/>
        <end position="196"/>
    </location>
</feature>
<feature type="binding site" evidence="1">
    <location>
        <begin position="30"/>
        <end position="37"/>
    </location>
    <ligand>
        <name>GTP</name>
        <dbReference type="ChEBI" id="CHEBI:37565"/>
    </ligand>
</feature>
<feature type="binding site" evidence="1">
    <location>
        <position position="37"/>
    </location>
    <ligand>
        <name>Mg(2+)</name>
        <dbReference type="ChEBI" id="CHEBI:18420"/>
    </ligand>
</feature>
<feature type="binding site" evidence="1">
    <location>
        <begin position="57"/>
        <end position="61"/>
    </location>
    <ligand>
        <name>GTP</name>
        <dbReference type="ChEBI" id="CHEBI:37565"/>
    </ligand>
</feature>
<feature type="binding site" evidence="1">
    <location>
        <position position="59"/>
    </location>
    <ligand>
        <name>Mg(2+)</name>
        <dbReference type="ChEBI" id="CHEBI:18420"/>
    </ligand>
</feature>
<feature type="binding site" evidence="1">
    <location>
        <begin position="82"/>
        <end position="85"/>
    </location>
    <ligand>
        <name>GTP</name>
        <dbReference type="ChEBI" id="CHEBI:37565"/>
    </ligand>
</feature>
<feature type="binding site" evidence="1">
    <location>
        <begin position="152"/>
        <end position="155"/>
    </location>
    <ligand>
        <name>GTP</name>
        <dbReference type="ChEBI" id="CHEBI:37565"/>
    </ligand>
</feature>
<feature type="binding site" evidence="1">
    <location>
        <begin position="175"/>
        <end position="177"/>
    </location>
    <ligand>
        <name>GTP</name>
        <dbReference type="ChEBI" id="CHEBI:37565"/>
    </ligand>
</feature>
<keyword id="KW-0131">Cell cycle</keyword>
<keyword id="KW-0132">Cell division</keyword>
<keyword id="KW-0342">GTP-binding</keyword>
<keyword id="KW-0460">Magnesium</keyword>
<keyword id="KW-0479">Metal-binding</keyword>
<keyword id="KW-0547">Nucleotide-binding</keyword>
<keyword id="KW-0717">Septation</keyword>
<dbReference type="EMBL" id="CP000768">
    <property type="protein sequence ID" value="ABS44681.1"/>
    <property type="molecule type" value="Genomic_DNA"/>
</dbReference>
<dbReference type="SMR" id="A7H4G2"/>
<dbReference type="KEGG" id="cjd:JJD26997_1349"/>
<dbReference type="HOGENOM" id="CLU_033732_3_2_7"/>
<dbReference type="Proteomes" id="UP000002302">
    <property type="component" value="Chromosome"/>
</dbReference>
<dbReference type="GO" id="GO:0005829">
    <property type="term" value="C:cytosol"/>
    <property type="evidence" value="ECO:0007669"/>
    <property type="project" value="TreeGrafter"/>
</dbReference>
<dbReference type="GO" id="GO:0005525">
    <property type="term" value="F:GTP binding"/>
    <property type="evidence" value="ECO:0007669"/>
    <property type="project" value="UniProtKB-UniRule"/>
</dbReference>
<dbReference type="GO" id="GO:0046872">
    <property type="term" value="F:metal ion binding"/>
    <property type="evidence" value="ECO:0007669"/>
    <property type="project" value="UniProtKB-KW"/>
</dbReference>
<dbReference type="GO" id="GO:0000917">
    <property type="term" value="P:division septum assembly"/>
    <property type="evidence" value="ECO:0007669"/>
    <property type="project" value="UniProtKB-KW"/>
</dbReference>
<dbReference type="CDD" id="cd01876">
    <property type="entry name" value="YihA_EngB"/>
    <property type="match status" value="1"/>
</dbReference>
<dbReference type="Gene3D" id="3.40.50.300">
    <property type="entry name" value="P-loop containing nucleotide triphosphate hydrolases"/>
    <property type="match status" value="1"/>
</dbReference>
<dbReference type="HAMAP" id="MF_00321">
    <property type="entry name" value="GTPase_EngB"/>
    <property type="match status" value="1"/>
</dbReference>
<dbReference type="InterPro" id="IPR030393">
    <property type="entry name" value="G_ENGB_dom"/>
</dbReference>
<dbReference type="InterPro" id="IPR006073">
    <property type="entry name" value="GTP-bd"/>
</dbReference>
<dbReference type="InterPro" id="IPR019987">
    <property type="entry name" value="GTP-bd_ribosome_bio_YsxC"/>
</dbReference>
<dbReference type="InterPro" id="IPR027417">
    <property type="entry name" value="P-loop_NTPase"/>
</dbReference>
<dbReference type="InterPro" id="IPR005225">
    <property type="entry name" value="Small_GTP-bd"/>
</dbReference>
<dbReference type="NCBIfam" id="TIGR03598">
    <property type="entry name" value="GTPase_YsxC"/>
    <property type="match status" value="1"/>
</dbReference>
<dbReference type="NCBIfam" id="TIGR00231">
    <property type="entry name" value="small_GTP"/>
    <property type="match status" value="1"/>
</dbReference>
<dbReference type="PANTHER" id="PTHR11649:SF13">
    <property type="entry name" value="ENGB-TYPE G DOMAIN-CONTAINING PROTEIN"/>
    <property type="match status" value="1"/>
</dbReference>
<dbReference type="PANTHER" id="PTHR11649">
    <property type="entry name" value="MSS1/TRME-RELATED GTP-BINDING PROTEIN"/>
    <property type="match status" value="1"/>
</dbReference>
<dbReference type="Pfam" id="PF01926">
    <property type="entry name" value="MMR_HSR1"/>
    <property type="match status" value="1"/>
</dbReference>
<dbReference type="SUPFAM" id="SSF52540">
    <property type="entry name" value="P-loop containing nucleoside triphosphate hydrolases"/>
    <property type="match status" value="1"/>
</dbReference>
<dbReference type="PROSITE" id="PS51706">
    <property type="entry name" value="G_ENGB"/>
    <property type="match status" value="1"/>
</dbReference>
<protein>
    <recommendedName>
        <fullName evidence="1">Probable GTP-binding protein EngB</fullName>
    </recommendedName>
</protein>
<proteinExistence type="inferred from homology"/>
<name>ENGB_CAMJD</name>